<protein>
    <recommendedName>
        <fullName evidence="1">CRISPR-associated endonuclease Cas1 2</fullName>
        <ecNumber evidence="1">3.1.-.-</ecNumber>
    </recommendedName>
</protein>
<comment type="function">
    <text evidence="1">CRISPR (clustered regularly interspaced short palindromic repeat), is an adaptive immune system that provides protection against mobile genetic elements (viruses, transposable elements and conjugative plasmids). CRISPR clusters contain spacers, sequences complementary to antecedent mobile elements, and target invading nucleic acids. CRISPR clusters are transcribed and processed into CRISPR RNA (crRNA). Acts as a dsDNA endonuclease. Involved in the integration of spacer DNA into the CRISPR cassette.</text>
</comment>
<comment type="cofactor">
    <cofactor evidence="1">
        <name>Mg(2+)</name>
        <dbReference type="ChEBI" id="CHEBI:18420"/>
    </cofactor>
    <cofactor evidence="1">
        <name>Mn(2+)</name>
        <dbReference type="ChEBI" id="CHEBI:29035"/>
    </cofactor>
</comment>
<comment type="subunit">
    <text evidence="1">Homodimer, forms a heterotetramer with a Cas2 homodimer.</text>
</comment>
<comment type="similarity">
    <text evidence="1">Belongs to the CRISPR-associated endonuclease Cas1 family.</text>
</comment>
<organism>
    <name type="scientific">Rhodospirillum rubrum (strain ATCC 11170 / ATH 1.1.1 / DSM 467 / LMG 4362 / NCIMB 8255 / S1)</name>
    <dbReference type="NCBI Taxonomy" id="269796"/>
    <lineage>
        <taxon>Bacteria</taxon>
        <taxon>Pseudomonadati</taxon>
        <taxon>Pseudomonadota</taxon>
        <taxon>Alphaproteobacteria</taxon>
        <taxon>Rhodospirillales</taxon>
        <taxon>Rhodospirillaceae</taxon>
        <taxon>Rhodospirillum</taxon>
    </lineage>
</organism>
<dbReference type="EC" id="3.1.-.-" evidence="1"/>
<dbReference type="EMBL" id="CP000230">
    <property type="protein sequence ID" value="ABC21634.1"/>
    <property type="molecule type" value="Genomic_DNA"/>
</dbReference>
<dbReference type="RefSeq" id="YP_425921.1">
    <property type="nucleotide sequence ID" value="NC_007643.1"/>
</dbReference>
<dbReference type="SMR" id="Q2RW61"/>
<dbReference type="STRING" id="269796.Rru_A0833"/>
<dbReference type="EnsemblBacteria" id="ABC21634">
    <property type="protein sequence ID" value="ABC21634"/>
    <property type="gene ID" value="Rru_A0833"/>
</dbReference>
<dbReference type="KEGG" id="rru:Rru_A0833"/>
<dbReference type="PATRIC" id="fig|269796.9.peg.886"/>
<dbReference type="eggNOG" id="COG1518">
    <property type="taxonomic scope" value="Bacteria"/>
</dbReference>
<dbReference type="HOGENOM" id="CLU_052779_1_0_5"/>
<dbReference type="PhylomeDB" id="Q2RW61"/>
<dbReference type="Proteomes" id="UP000001929">
    <property type="component" value="Chromosome"/>
</dbReference>
<dbReference type="GO" id="GO:0003677">
    <property type="term" value="F:DNA binding"/>
    <property type="evidence" value="ECO:0007669"/>
    <property type="project" value="UniProtKB-KW"/>
</dbReference>
<dbReference type="GO" id="GO:0004520">
    <property type="term" value="F:DNA endonuclease activity"/>
    <property type="evidence" value="ECO:0007669"/>
    <property type="project" value="InterPro"/>
</dbReference>
<dbReference type="GO" id="GO:0046872">
    <property type="term" value="F:metal ion binding"/>
    <property type="evidence" value="ECO:0007669"/>
    <property type="project" value="UniProtKB-UniRule"/>
</dbReference>
<dbReference type="GO" id="GO:0051607">
    <property type="term" value="P:defense response to virus"/>
    <property type="evidence" value="ECO:0007669"/>
    <property type="project" value="UniProtKB-UniRule"/>
</dbReference>
<dbReference type="GO" id="GO:0043571">
    <property type="term" value="P:maintenance of CRISPR repeat elements"/>
    <property type="evidence" value="ECO:0007669"/>
    <property type="project" value="UniProtKB-UniRule"/>
</dbReference>
<dbReference type="CDD" id="cd09721">
    <property type="entry name" value="Cas1_I-C"/>
    <property type="match status" value="1"/>
</dbReference>
<dbReference type="Gene3D" id="1.20.120.920">
    <property type="entry name" value="CRISPR-associated endonuclease Cas1, C-terminal domain"/>
    <property type="match status" value="1"/>
</dbReference>
<dbReference type="Gene3D" id="3.100.10.20">
    <property type="entry name" value="CRISPR-associated endonuclease Cas1, N-terminal domain"/>
    <property type="match status" value="1"/>
</dbReference>
<dbReference type="HAMAP" id="MF_01470">
    <property type="entry name" value="Cas1"/>
    <property type="match status" value="1"/>
</dbReference>
<dbReference type="InterPro" id="IPR050646">
    <property type="entry name" value="Cas1"/>
</dbReference>
<dbReference type="InterPro" id="IPR002729">
    <property type="entry name" value="CRISPR-assoc_Cas1"/>
</dbReference>
<dbReference type="InterPro" id="IPR042206">
    <property type="entry name" value="CRISPR-assoc_Cas1_C"/>
</dbReference>
<dbReference type="InterPro" id="IPR019856">
    <property type="entry name" value="CRISPR-assoc_Cas1_DVULG"/>
</dbReference>
<dbReference type="InterPro" id="IPR042211">
    <property type="entry name" value="CRISPR-assoc_Cas1_N"/>
</dbReference>
<dbReference type="NCBIfam" id="TIGR00287">
    <property type="entry name" value="cas1"/>
    <property type="match status" value="1"/>
</dbReference>
<dbReference type="NCBIfam" id="TIGR03640">
    <property type="entry name" value="cas1_DVULG"/>
    <property type="match status" value="1"/>
</dbReference>
<dbReference type="PANTHER" id="PTHR34353">
    <property type="entry name" value="CRISPR-ASSOCIATED ENDONUCLEASE CAS1 1"/>
    <property type="match status" value="1"/>
</dbReference>
<dbReference type="PANTHER" id="PTHR34353:SF2">
    <property type="entry name" value="CRISPR-ASSOCIATED ENDONUCLEASE CAS1 1"/>
    <property type="match status" value="1"/>
</dbReference>
<dbReference type="Pfam" id="PF01867">
    <property type="entry name" value="Cas_Cas1"/>
    <property type="match status" value="1"/>
</dbReference>
<feature type="chain" id="PRO_0000417084" description="CRISPR-associated endonuclease Cas1 2">
    <location>
        <begin position="1"/>
        <end position="344"/>
    </location>
</feature>
<feature type="binding site" evidence="1">
    <location>
        <position position="167"/>
    </location>
    <ligand>
        <name>Mn(2+)</name>
        <dbReference type="ChEBI" id="CHEBI:29035"/>
    </ligand>
</feature>
<feature type="binding site" evidence="1">
    <location>
        <position position="235"/>
    </location>
    <ligand>
        <name>Mn(2+)</name>
        <dbReference type="ChEBI" id="CHEBI:29035"/>
    </ligand>
</feature>
<feature type="binding site" evidence="1">
    <location>
        <position position="250"/>
    </location>
    <ligand>
        <name>Mn(2+)</name>
        <dbReference type="ChEBI" id="CHEBI:29035"/>
    </ligand>
</feature>
<proteinExistence type="inferred from homology"/>
<reference key="1">
    <citation type="journal article" date="2011" name="Stand. Genomic Sci.">
        <title>Complete genome sequence of Rhodospirillum rubrum type strain (S1).</title>
        <authorList>
            <person name="Munk A.C."/>
            <person name="Copeland A."/>
            <person name="Lucas S."/>
            <person name="Lapidus A."/>
            <person name="Del Rio T.G."/>
            <person name="Barry K."/>
            <person name="Detter J.C."/>
            <person name="Hammon N."/>
            <person name="Israni S."/>
            <person name="Pitluck S."/>
            <person name="Brettin T."/>
            <person name="Bruce D."/>
            <person name="Han C."/>
            <person name="Tapia R."/>
            <person name="Gilna P."/>
            <person name="Schmutz J."/>
            <person name="Larimer F."/>
            <person name="Land M."/>
            <person name="Kyrpides N.C."/>
            <person name="Mavromatis K."/>
            <person name="Richardson P."/>
            <person name="Rohde M."/>
            <person name="Goeker M."/>
            <person name="Klenk H.P."/>
            <person name="Zhang Y."/>
            <person name="Roberts G.P."/>
            <person name="Reslewic S."/>
            <person name="Schwartz D.C."/>
        </authorList>
    </citation>
    <scope>NUCLEOTIDE SEQUENCE [LARGE SCALE GENOMIC DNA]</scope>
    <source>
        <strain>ATCC 11170 / ATH 1.1.1 / DSM 467 / LMG 4362 / NCIMB 8255 / S1</strain>
    </source>
</reference>
<sequence length="344" mass="37851">MKKLLNTVYVTTEGTGLRKDGENLVAELDGVQKGRVPLHMVGSVVVFGGTYVSPGLMGACAAHGITIVLLDRVGRFQARVEGPVAGNVLLRRAQYKASEAPEDIVKSLILGKVSNQRAVLLRALRDHGADFPAAEALAVKDAIDRMAHILRKVGASAEDADHLRGAEGEAASLYFGVFGQLIRSPDGDFAFRGRSRRPPLDPTNALLSFLYTLLTHDCRSACESVGLDPAVGFLHRDRPGRPSLALDLMEELRPVLVDRLALSLINRRQLRATDFQRLDGGAVLLTDEARKTVLSAWQERKKQERRHPFLEESAPLGLVPYLQAQMLARHLRGDLDAYPPWFWK</sequence>
<gene>
    <name evidence="1" type="primary">cas1-2</name>
    <name type="ordered locus">Rru_A0833</name>
</gene>
<evidence type="ECO:0000255" key="1">
    <source>
        <dbReference type="HAMAP-Rule" id="MF_01470"/>
    </source>
</evidence>
<keyword id="KW-0051">Antiviral defense</keyword>
<keyword id="KW-0238">DNA-binding</keyword>
<keyword id="KW-0255">Endonuclease</keyword>
<keyword id="KW-0378">Hydrolase</keyword>
<keyword id="KW-0460">Magnesium</keyword>
<keyword id="KW-0464">Manganese</keyword>
<keyword id="KW-0479">Metal-binding</keyword>
<keyword id="KW-0540">Nuclease</keyword>
<keyword id="KW-1185">Reference proteome</keyword>
<name>CAS1B_RHORT</name>
<accession>Q2RW61</accession>